<proteinExistence type="evidence at transcript level"/>
<dbReference type="EMBL" id="AF246265">
    <property type="protein sequence ID" value="AAG33704.1"/>
    <property type="molecule type" value="mRNA"/>
</dbReference>
<dbReference type="EMBL" id="AK029352">
    <property type="protein sequence ID" value="BAC26412.1"/>
    <property type="molecule type" value="mRNA"/>
</dbReference>
<dbReference type="EMBL" id="AK075867">
    <property type="protein sequence ID" value="BAC36016.1"/>
    <property type="molecule type" value="mRNA"/>
</dbReference>
<dbReference type="EMBL" id="AK081704">
    <property type="protein sequence ID" value="BAC38301.1"/>
    <property type="molecule type" value="mRNA"/>
</dbReference>
<dbReference type="EMBL" id="BC055047">
    <property type="protein sequence ID" value="AAH55047.1"/>
    <property type="molecule type" value="mRNA"/>
</dbReference>
<dbReference type="EMBL" id="BC055859">
    <property type="protein sequence ID" value="AAH55859.1"/>
    <property type="molecule type" value="mRNA"/>
</dbReference>
<dbReference type="CCDS" id="CCDS27380.1"/>
<dbReference type="RefSeq" id="NP_112150.1">
    <property type="nucleotide sequence ID" value="NM_030888.4"/>
</dbReference>
<dbReference type="SMR" id="Q9ES30"/>
<dbReference type="FunCoup" id="Q9ES30">
    <property type="interactions" value="43"/>
</dbReference>
<dbReference type="STRING" id="10090.ENSMUSP00000106152"/>
<dbReference type="PhosphoSitePlus" id="Q9ES30"/>
<dbReference type="jPOST" id="Q9ES30"/>
<dbReference type="ProteomicsDB" id="265399"/>
<dbReference type="Pumba" id="Q9ES30"/>
<dbReference type="Ensembl" id="ENSMUST00000022853.15">
    <property type="protein sequence ID" value="ENSMUSP00000022853.9"/>
    <property type="gene ID" value="ENSMUSG00000058914.13"/>
</dbReference>
<dbReference type="GeneID" id="81799"/>
<dbReference type="KEGG" id="mmu:81799"/>
<dbReference type="UCSC" id="uc007vgu.2">
    <property type="organism name" value="mouse"/>
</dbReference>
<dbReference type="AGR" id="MGI:1932136"/>
<dbReference type="CTD" id="114899"/>
<dbReference type="MGI" id="MGI:1932136">
    <property type="gene designation" value="C1qtnf3"/>
</dbReference>
<dbReference type="VEuPathDB" id="HostDB:ENSMUSG00000058914"/>
<dbReference type="eggNOG" id="ENOG502QSK2">
    <property type="taxonomic scope" value="Eukaryota"/>
</dbReference>
<dbReference type="GeneTree" id="ENSGT00940000161378"/>
<dbReference type="HOGENOM" id="CLU_001074_0_1_1"/>
<dbReference type="InParanoid" id="Q9ES30"/>
<dbReference type="OMA" id="HMLALFF"/>
<dbReference type="OrthoDB" id="6154955at2759"/>
<dbReference type="PhylomeDB" id="Q9ES30"/>
<dbReference type="BioGRID-ORCS" id="81799">
    <property type="hits" value="2 hits in 76 CRISPR screens"/>
</dbReference>
<dbReference type="PRO" id="PR:Q9ES30"/>
<dbReference type="Proteomes" id="UP000000589">
    <property type="component" value="Chromosome 15"/>
</dbReference>
<dbReference type="RNAct" id="Q9ES30">
    <property type="molecule type" value="protein"/>
</dbReference>
<dbReference type="Bgee" id="ENSMUSG00000058914">
    <property type="expression patterns" value="Expressed in humerus cartilage element and 136 other cell types or tissues"/>
</dbReference>
<dbReference type="ExpressionAtlas" id="Q9ES30">
    <property type="expression patterns" value="baseline and differential"/>
</dbReference>
<dbReference type="GO" id="GO:0005581">
    <property type="term" value="C:collagen trimer"/>
    <property type="evidence" value="ECO:0007669"/>
    <property type="project" value="UniProtKB-KW"/>
</dbReference>
<dbReference type="GO" id="GO:0005576">
    <property type="term" value="C:extracellular region"/>
    <property type="evidence" value="ECO:0000314"/>
    <property type="project" value="MGI"/>
</dbReference>
<dbReference type="GO" id="GO:0005615">
    <property type="term" value="C:extracellular space"/>
    <property type="evidence" value="ECO:0000314"/>
    <property type="project" value="MGI"/>
</dbReference>
<dbReference type="GO" id="GO:0032991">
    <property type="term" value="C:protein-containing complex"/>
    <property type="evidence" value="ECO:0000314"/>
    <property type="project" value="MGI"/>
</dbReference>
<dbReference type="GO" id="GO:0042802">
    <property type="term" value="F:identical protein binding"/>
    <property type="evidence" value="ECO:0000314"/>
    <property type="project" value="MGI"/>
</dbReference>
<dbReference type="GO" id="GO:0070371">
    <property type="term" value="P:ERK1 and ERK2 cascade"/>
    <property type="evidence" value="ECO:0000314"/>
    <property type="project" value="MGI"/>
</dbReference>
<dbReference type="GO" id="GO:0042593">
    <property type="term" value="P:glucose homeostasis"/>
    <property type="evidence" value="ECO:0000314"/>
    <property type="project" value="MGI"/>
</dbReference>
<dbReference type="GO" id="GO:0045721">
    <property type="term" value="P:negative regulation of gluconeogenesis"/>
    <property type="evidence" value="ECO:0000314"/>
    <property type="project" value="MGI"/>
</dbReference>
<dbReference type="GO" id="GO:0043491">
    <property type="term" value="P:phosphatidylinositol 3-kinase/protein kinase B signal transduction"/>
    <property type="evidence" value="ECO:0000314"/>
    <property type="project" value="MGI"/>
</dbReference>
<dbReference type="GO" id="GO:0070165">
    <property type="term" value="P:positive regulation of adiponectin secretion"/>
    <property type="evidence" value="ECO:0000314"/>
    <property type="project" value="UniProtKB"/>
</dbReference>
<dbReference type="GO" id="GO:0001819">
    <property type="term" value="P:positive regulation of cytokine production"/>
    <property type="evidence" value="ECO:0000314"/>
    <property type="project" value="UniProtKB"/>
</dbReference>
<dbReference type="GO" id="GO:0070374">
    <property type="term" value="P:positive regulation of ERK1 and ERK2 cascade"/>
    <property type="evidence" value="ECO:0000314"/>
    <property type="project" value="MGI"/>
</dbReference>
<dbReference type="GO" id="GO:0051897">
    <property type="term" value="P:positive regulation of phosphatidylinositol 3-kinase/protein kinase B signal transduction"/>
    <property type="evidence" value="ECO:0000314"/>
    <property type="project" value="MGI"/>
</dbReference>
<dbReference type="FunFam" id="2.60.120.40:FF:000006">
    <property type="entry name" value="complement C1q tumor necrosis factor-related protein 3 isoform X2"/>
    <property type="match status" value="1"/>
</dbReference>
<dbReference type="Gene3D" id="2.60.120.40">
    <property type="match status" value="1"/>
</dbReference>
<dbReference type="InterPro" id="IPR001073">
    <property type="entry name" value="C1q_dom"/>
</dbReference>
<dbReference type="InterPro" id="IPR008160">
    <property type="entry name" value="Collagen"/>
</dbReference>
<dbReference type="InterPro" id="IPR050392">
    <property type="entry name" value="Collagen/C1q_domain"/>
</dbReference>
<dbReference type="InterPro" id="IPR008983">
    <property type="entry name" value="Tumour_necrosis_fac-like_dom"/>
</dbReference>
<dbReference type="PANTHER" id="PTHR15427:SF52">
    <property type="entry name" value="C1Q DOMAIN-CONTAINING PROTEIN"/>
    <property type="match status" value="1"/>
</dbReference>
<dbReference type="PANTHER" id="PTHR15427">
    <property type="entry name" value="EMILIN ELASTIN MICROFIBRIL INTERFACE-LOCATED PROTEIN ELASTIN MICROFIBRIL INTERFACER"/>
    <property type="match status" value="1"/>
</dbReference>
<dbReference type="Pfam" id="PF00386">
    <property type="entry name" value="C1q"/>
    <property type="match status" value="1"/>
</dbReference>
<dbReference type="Pfam" id="PF01391">
    <property type="entry name" value="Collagen"/>
    <property type="match status" value="1"/>
</dbReference>
<dbReference type="PRINTS" id="PR00007">
    <property type="entry name" value="COMPLEMNTC1Q"/>
</dbReference>
<dbReference type="SMART" id="SM00110">
    <property type="entry name" value="C1Q"/>
    <property type="match status" value="1"/>
</dbReference>
<dbReference type="SUPFAM" id="SSF49842">
    <property type="entry name" value="TNF-like"/>
    <property type="match status" value="1"/>
</dbReference>
<dbReference type="PROSITE" id="PS50871">
    <property type="entry name" value="C1Q"/>
    <property type="match status" value="1"/>
</dbReference>
<protein>
    <recommendedName>
        <fullName>Complement C1q tumor necrosis factor-related protein 3</fullName>
    </recommendedName>
    <alternativeName>
        <fullName>Collagenous repeat-containing sequence 26 kDa protein</fullName>
        <shortName>CORS26</shortName>
    </alternativeName>
    <alternativeName>
        <fullName>Secretory protein CORS26</fullName>
    </alternativeName>
</protein>
<comment type="subcellular location">
    <subcellularLocation>
        <location evidence="4">Secreted</location>
    </subcellularLocation>
</comment>
<gene>
    <name type="primary">C1qtnf3</name>
    <name type="synonym">Cors26</name>
    <name type="synonym">Ctrp3</name>
</gene>
<evidence type="ECO:0000255" key="1"/>
<evidence type="ECO:0000255" key="2">
    <source>
        <dbReference type="PROSITE-ProRule" id="PRU00368"/>
    </source>
</evidence>
<evidence type="ECO:0000256" key="3">
    <source>
        <dbReference type="SAM" id="MobiDB-lite"/>
    </source>
</evidence>
<evidence type="ECO:0000305" key="4"/>
<sequence>MLGRQRIWWHLLPLLFLPFCLCQDEYMESPQAGGLPPDCSKCCHGDYGFRGYQGPPGPPGPPGIPGNHGNNGNNGATGHEGAKGEKGDKGDLGPRGERGQHGPKGEKGYPGVPPELQIAFMASLATHFSNQNSGIIFSSVETNIGNFFDVMTGRFGAPVSGVYFFTFSMMKHEDVEEVYVYLMHNGNTVFSMYSYETKGKSDTSSNHAVLKLAKGDEVWLRMGNGALHGDHQRFSTFAGFLLFETK</sequence>
<organism>
    <name type="scientific">Mus musculus</name>
    <name type="common">Mouse</name>
    <dbReference type="NCBI Taxonomy" id="10090"/>
    <lineage>
        <taxon>Eukaryota</taxon>
        <taxon>Metazoa</taxon>
        <taxon>Chordata</taxon>
        <taxon>Craniata</taxon>
        <taxon>Vertebrata</taxon>
        <taxon>Euteleostomi</taxon>
        <taxon>Mammalia</taxon>
        <taxon>Eutheria</taxon>
        <taxon>Euarchontoglires</taxon>
        <taxon>Glires</taxon>
        <taxon>Rodentia</taxon>
        <taxon>Myomorpha</taxon>
        <taxon>Muroidea</taxon>
        <taxon>Muridae</taxon>
        <taxon>Murinae</taxon>
        <taxon>Mus</taxon>
        <taxon>Mus</taxon>
    </lineage>
</organism>
<feature type="signal peptide" evidence="1">
    <location>
        <begin position="1"/>
        <end position="22"/>
    </location>
</feature>
<feature type="chain" id="PRO_0000003532" description="Complement C1q tumor necrosis factor-related protein 3">
    <location>
        <begin position="23"/>
        <end position="246"/>
    </location>
</feature>
<feature type="domain" description="Collagen-like">
    <location>
        <begin position="51"/>
        <end position="113"/>
    </location>
</feature>
<feature type="domain" description="C1q" evidence="2">
    <location>
        <begin position="113"/>
        <end position="246"/>
    </location>
</feature>
<feature type="region of interest" description="Disordered" evidence="3">
    <location>
        <begin position="53"/>
        <end position="112"/>
    </location>
</feature>
<feature type="compositionally biased region" description="Pro residues" evidence="3">
    <location>
        <begin position="55"/>
        <end position="64"/>
    </location>
</feature>
<feature type="compositionally biased region" description="Low complexity" evidence="3">
    <location>
        <begin position="65"/>
        <end position="74"/>
    </location>
</feature>
<feature type="compositionally biased region" description="Basic and acidic residues" evidence="3">
    <location>
        <begin position="80"/>
        <end position="107"/>
    </location>
</feature>
<reference key="1">
    <citation type="journal article" date="2001" name="J. Biol. Chem.">
        <title>Molecular cloning and characterization of a novel gene, CORS26, encoding a putative secretory protein and its possible involvement in skeletal development.</title>
        <authorList>
            <person name="Maeda T."/>
            <person name="Abe M."/>
            <person name="Kurisu K."/>
            <person name="Jikko A."/>
            <person name="Furukawa S."/>
        </authorList>
    </citation>
    <scope>NUCLEOTIDE SEQUENCE [MRNA]</scope>
</reference>
<reference key="2">
    <citation type="journal article" date="2005" name="Science">
        <title>The transcriptional landscape of the mammalian genome.</title>
        <authorList>
            <person name="Carninci P."/>
            <person name="Kasukawa T."/>
            <person name="Katayama S."/>
            <person name="Gough J."/>
            <person name="Frith M.C."/>
            <person name="Maeda N."/>
            <person name="Oyama R."/>
            <person name="Ravasi T."/>
            <person name="Lenhard B."/>
            <person name="Wells C."/>
            <person name="Kodzius R."/>
            <person name="Shimokawa K."/>
            <person name="Bajic V.B."/>
            <person name="Brenner S.E."/>
            <person name="Batalov S."/>
            <person name="Forrest A.R."/>
            <person name="Zavolan M."/>
            <person name="Davis M.J."/>
            <person name="Wilming L.G."/>
            <person name="Aidinis V."/>
            <person name="Allen J.E."/>
            <person name="Ambesi-Impiombato A."/>
            <person name="Apweiler R."/>
            <person name="Aturaliya R.N."/>
            <person name="Bailey T.L."/>
            <person name="Bansal M."/>
            <person name="Baxter L."/>
            <person name="Beisel K.W."/>
            <person name="Bersano T."/>
            <person name="Bono H."/>
            <person name="Chalk A.M."/>
            <person name="Chiu K.P."/>
            <person name="Choudhary V."/>
            <person name="Christoffels A."/>
            <person name="Clutterbuck D.R."/>
            <person name="Crowe M.L."/>
            <person name="Dalla E."/>
            <person name="Dalrymple B.P."/>
            <person name="de Bono B."/>
            <person name="Della Gatta G."/>
            <person name="di Bernardo D."/>
            <person name="Down T."/>
            <person name="Engstrom P."/>
            <person name="Fagiolini M."/>
            <person name="Faulkner G."/>
            <person name="Fletcher C.F."/>
            <person name="Fukushima T."/>
            <person name="Furuno M."/>
            <person name="Futaki S."/>
            <person name="Gariboldi M."/>
            <person name="Georgii-Hemming P."/>
            <person name="Gingeras T.R."/>
            <person name="Gojobori T."/>
            <person name="Green R.E."/>
            <person name="Gustincich S."/>
            <person name="Harbers M."/>
            <person name="Hayashi Y."/>
            <person name="Hensch T.K."/>
            <person name="Hirokawa N."/>
            <person name="Hill D."/>
            <person name="Huminiecki L."/>
            <person name="Iacono M."/>
            <person name="Ikeo K."/>
            <person name="Iwama A."/>
            <person name="Ishikawa T."/>
            <person name="Jakt M."/>
            <person name="Kanapin A."/>
            <person name="Katoh M."/>
            <person name="Kawasawa Y."/>
            <person name="Kelso J."/>
            <person name="Kitamura H."/>
            <person name="Kitano H."/>
            <person name="Kollias G."/>
            <person name="Krishnan S.P."/>
            <person name="Kruger A."/>
            <person name="Kummerfeld S.K."/>
            <person name="Kurochkin I.V."/>
            <person name="Lareau L.F."/>
            <person name="Lazarevic D."/>
            <person name="Lipovich L."/>
            <person name="Liu J."/>
            <person name="Liuni S."/>
            <person name="McWilliam S."/>
            <person name="Madan Babu M."/>
            <person name="Madera M."/>
            <person name="Marchionni L."/>
            <person name="Matsuda H."/>
            <person name="Matsuzawa S."/>
            <person name="Miki H."/>
            <person name="Mignone F."/>
            <person name="Miyake S."/>
            <person name="Morris K."/>
            <person name="Mottagui-Tabar S."/>
            <person name="Mulder N."/>
            <person name="Nakano N."/>
            <person name="Nakauchi H."/>
            <person name="Ng P."/>
            <person name="Nilsson R."/>
            <person name="Nishiguchi S."/>
            <person name="Nishikawa S."/>
            <person name="Nori F."/>
            <person name="Ohara O."/>
            <person name="Okazaki Y."/>
            <person name="Orlando V."/>
            <person name="Pang K.C."/>
            <person name="Pavan W.J."/>
            <person name="Pavesi G."/>
            <person name="Pesole G."/>
            <person name="Petrovsky N."/>
            <person name="Piazza S."/>
            <person name="Reed J."/>
            <person name="Reid J.F."/>
            <person name="Ring B.Z."/>
            <person name="Ringwald M."/>
            <person name="Rost B."/>
            <person name="Ruan Y."/>
            <person name="Salzberg S.L."/>
            <person name="Sandelin A."/>
            <person name="Schneider C."/>
            <person name="Schoenbach C."/>
            <person name="Sekiguchi K."/>
            <person name="Semple C.A."/>
            <person name="Seno S."/>
            <person name="Sessa L."/>
            <person name="Sheng Y."/>
            <person name="Shibata Y."/>
            <person name="Shimada H."/>
            <person name="Shimada K."/>
            <person name="Silva D."/>
            <person name="Sinclair B."/>
            <person name="Sperling S."/>
            <person name="Stupka E."/>
            <person name="Sugiura K."/>
            <person name="Sultana R."/>
            <person name="Takenaka Y."/>
            <person name="Taki K."/>
            <person name="Tammoja K."/>
            <person name="Tan S.L."/>
            <person name="Tang S."/>
            <person name="Taylor M.S."/>
            <person name="Tegner J."/>
            <person name="Teichmann S.A."/>
            <person name="Ueda H.R."/>
            <person name="van Nimwegen E."/>
            <person name="Verardo R."/>
            <person name="Wei C.L."/>
            <person name="Yagi K."/>
            <person name="Yamanishi H."/>
            <person name="Zabarovsky E."/>
            <person name="Zhu S."/>
            <person name="Zimmer A."/>
            <person name="Hide W."/>
            <person name="Bult C."/>
            <person name="Grimmond S.M."/>
            <person name="Teasdale R.D."/>
            <person name="Liu E.T."/>
            <person name="Brusic V."/>
            <person name="Quackenbush J."/>
            <person name="Wahlestedt C."/>
            <person name="Mattick J.S."/>
            <person name="Hume D.A."/>
            <person name="Kai C."/>
            <person name="Sasaki D."/>
            <person name="Tomaru Y."/>
            <person name="Fukuda S."/>
            <person name="Kanamori-Katayama M."/>
            <person name="Suzuki M."/>
            <person name="Aoki J."/>
            <person name="Arakawa T."/>
            <person name="Iida J."/>
            <person name="Imamura K."/>
            <person name="Itoh M."/>
            <person name="Kato T."/>
            <person name="Kawaji H."/>
            <person name="Kawagashira N."/>
            <person name="Kawashima T."/>
            <person name="Kojima M."/>
            <person name="Kondo S."/>
            <person name="Konno H."/>
            <person name="Nakano K."/>
            <person name="Ninomiya N."/>
            <person name="Nishio T."/>
            <person name="Okada M."/>
            <person name="Plessy C."/>
            <person name="Shibata K."/>
            <person name="Shiraki T."/>
            <person name="Suzuki S."/>
            <person name="Tagami M."/>
            <person name="Waki K."/>
            <person name="Watahiki A."/>
            <person name="Okamura-Oho Y."/>
            <person name="Suzuki H."/>
            <person name="Kawai J."/>
            <person name="Hayashizaki Y."/>
        </authorList>
    </citation>
    <scope>NUCLEOTIDE SEQUENCE [LARGE SCALE MRNA]</scope>
    <source>
        <strain>C57BL/6J</strain>
        <tissue>Head</tissue>
        <tissue>Tongue</tissue>
    </source>
</reference>
<reference key="3">
    <citation type="journal article" date="2004" name="Genome Res.">
        <title>The status, quality, and expansion of the NIH full-length cDNA project: the Mammalian Gene Collection (MGC).</title>
        <authorList>
            <consortium name="The MGC Project Team"/>
        </authorList>
    </citation>
    <scope>NUCLEOTIDE SEQUENCE [LARGE SCALE MRNA]</scope>
    <source>
        <strain>FVB/N</strain>
        <strain>FVB/N-3</strain>
        <tissue>Kidney</tissue>
        <tissue>Mammary tumor</tissue>
    </source>
</reference>
<keyword id="KW-0176">Collagen</keyword>
<keyword id="KW-1185">Reference proteome</keyword>
<keyword id="KW-0964">Secreted</keyword>
<keyword id="KW-0732">Signal</keyword>
<name>C1QT3_MOUSE</name>
<accession>Q9ES30</accession>